<dbReference type="EMBL" id="AF215935">
    <property type="protein sequence ID" value="AAF65540.1"/>
    <property type="molecule type" value="mRNA"/>
</dbReference>
<dbReference type="EMBL" id="AF530062">
    <property type="protein sequence ID" value="AAQ09946.1"/>
    <property type="molecule type" value="mRNA"/>
</dbReference>
<dbReference type="EMBL" id="AY359879">
    <property type="protein sequence ID" value="AAQ63402.1"/>
    <property type="molecule type" value="mRNA"/>
</dbReference>
<dbReference type="EMBL" id="AY568086">
    <property type="protein sequence ID" value="AAS68366.1"/>
    <property type="molecule type" value="mRNA"/>
</dbReference>
<dbReference type="EMBL" id="D14663">
    <property type="protein sequence ID" value="BAA03497.1"/>
    <property type="molecule type" value="mRNA"/>
</dbReference>
<dbReference type="EMBL" id="BX647742">
    <property type="status" value="NOT_ANNOTATED_CDS"/>
    <property type="molecule type" value="mRNA"/>
</dbReference>
<dbReference type="EMBL" id="AK290205">
    <property type="protein sequence ID" value="BAF82894.1"/>
    <property type="molecule type" value="mRNA"/>
</dbReference>
<dbReference type="EMBL" id="AC012557">
    <property type="status" value="NOT_ANNOTATED_CDS"/>
    <property type="molecule type" value="Genomic_DNA"/>
</dbReference>
<dbReference type="EMBL" id="CH471055">
    <property type="protein sequence ID" value="EAW65424.1"/>
    <property type="molecule type" value="Genomic_DNA"/>
</dbReference>
<dbReference type="EMBL" id="CH471055">
    <property type="protein sequence ID" value="EAW65427.1"/>
    <property type="molecule type" value="Genomic_DNA"/>
</dbReference>
<dbReference type="EMBL" id="BC000630">
    <property type="protein sequence ID" value="AAH00630.1"/>
    <property type="molecule type" value="mRNA"/>
</dbReference>
<dbReference type="EMBL" id="BC000904">
    <property type="protein sequence ID" value="AAH00904.1"/>
    <property type="molecule type" value="mRNA"/>
</dbReference>
<dbReference type="EMBL" id="BC012369">
    <property type="protein sequence ID" value="AAH12369.1"/>
    <property type="molecule type" value="mRNA"/>
</dbReference>
<dbReference type="CCDS" id="CCDS2901.1">
    <molecule id="Q15008-1"/>
</dbReference>
<dbReference type="CCDS" id="CCDS63677.1">
    <molecule id="Q15008-4"/>
</dbReference>
<dbReference type="CCDS" id="CCDS63678.1">
    <molecule id="Q15008-3"/>
</dbReference>
<dbReference type="CCDS" id="CCDS63679.1">
    <molecule id="Q15008-2"/>
</dbReference>
<dbReference type="RefSeq" id="NP_001258708.1">
    <molecule id="Q15008-4"/>
    <property type="nucleotide sequence ID" value="NM_001271779.2"/>
</dbReference>
<dbReference type="RefSeq" id="NP_001258709.1">
    <molecule id="Q15008-2"/>
    <property type="nucleotide sequence ID" value="NM_001271780.2"/>
</dbReference>
<dbReference type="RefSeq" id="NP_001258710.1">
    <molecule id="Q15008-3"/>
    <property type="nucleotide sequence ID" value="NM_001271781.2"/>
</dbReference>
<dbReference type="RefSeq" id="NP_055629.1">
    <molecule id="Q15008-1"/>
    <property type="nucleotide sequence ID" value="NM_014814.3"/>
</dbReference>
<dbReference type="PDB" id="5GJQ">
    <property type="method" value="EM"/>
    <property type="resolution" value="4.50 A"/>
    <property type="chains" value="R=1-389"/>
</dbReference>
<dbReference type="PDB" id="5GJR">
    <property type="method" value="EM"/>
    <property type="resolution" value="3.50 A"/>
    <property type="chains" value="5/R=1-389"/>
</dbReference>
<dbReference type="PDB" id="5L4K">
    <property type="method" value="EM"/>
    <property type="resolution" value="4.50 A"/>
    <property type="chains" value="R=1-389"/>
</dbReference>
<dbReference type="PDB" id="5LN3">
    <property type="method" value="EM"/>
    <property type="resolution" value="6.80 A"/>
    <property type="chains" value="R=1-389"/>
</dbReference>
<dbReference type="PDB" id="5M32">
    <property type="method" value="EM"/>
    <property type="resolution" value="3.80 A"/>
    <property type="chains" value="m=1-389"/>
</dbReference>
<dbReference type="PDB" id="5T0C">
    <property type="method" value="EM"/>
    <property type="resolution" value="3.80 A"/>
    <property type="chains" value="AY/BY=1-389"/>
</dbReference>
<dbReference type="PDB" id="5T0G">
    <property type="method" value="EM"/>
    <property type="resolution" value="4.40 A"/>
    <property type="chains" value="Y=1-389"/>
</dbReference>
<dbReference type="PDB" id="5T0H">
    <property type="method" value="EM"/>
    <property type="resolution" value="6.80 A"/>
    <property type="chains" value="Y=1-389"/>
</dbReference>
<dbReference type="PDB" id="5T0I">
    <property type="method" value="EM"/>
    <property type="resolution" value="8.00 A"/>
    <property type="chains" value="Y=1-389"/>
</dbReference>
<dbReference type="PDB" id="5T0J">
    <property type="method" value="EM"/>
    <property type="resolution" value="8.00 A"/>
    <property type="chains" value="Y=1-389"/>
</dbReference>
<dbReference type="PDB" id="5VFP">
    <property type="method" value="EM"/>
    <property type="resolution" value="4.20 A"/>
    <property type="chains" value="Y=12-389"/>
</dbReference>
<dbReference type="PDB" id="5VFQ">
    <property type="method" value="EM"/>
    <property type="resolution" value="4.20 A"/>
    <property type="chains" value="Y=12-389"/>
</dbReference>
<dbReference type="PDB" id="5VFR">
    <property type="method" value="EM"/>
    <property type="resolution" value="4.90 A"/>
    <property type="chains" value="Y=12-389"/>
</dbReference>
<dbReference type="PDB" id="5VFS">
    <property type="method" value="EM"/>
    <property type="resolution" value="3.60 A"/>
    <property type="chains" value="Y=12-389"/>
</dbReference>
<dbReference type="PDB" id="5VFT">
    <property type="method" value="EM"/>
    <property type="resolution" value="7.00 A"/>
    <property type="chains" value="Y=12-389"/>
</dbReference>
<dbReference type="PDB" id="5VFU">
    <property type="method" value="EM"/>
    <property type="resolution" value="5.80 A"/>
    <property type="chains" value="Y=12-389"/>
</dbReference>
<dbReference type="PDB" id="5VGZ">
    <property type="method" value="EM"/>
    <property type="resolution" value="3.70 A"/>
    <property type="chains" value="Y=12-389"/>
</dbReference>
<dbReference type="PDB" id="5VHF">
    <property type="method" value="EM"/>
    <property type="resolution" value="5.70 A"/>
    <property type="chains" value="Y=12-389"/>
</dbReference>
<dbReference type="PDB" id="5VHH">
    <property type="method" value="EM"/>
    <property type="resolution" value="6.10 A"/>
    <property type="chains" value="Y=12-389"/>
</dbReference>
<dbReference type="PDB" id="5VHI">
    <property type="method" value="EM"/>
    <property type="resolution" value="6.80 A"/>
    <property type="chains" value="Y=12-389"/>
</dbReference>
<dbReference type="PDB" id="5VHS">
    <property type="method" value="EM"/>
    <property type="resolution" value="8.80 A"/>
    <property type="chains" value="Y=12-389"/>
</dbReference>
<dbReference type="PDB" id="6MSB">
    <property type="method" value="EM"/>
    <property type="resolution" value="3.00 A"/>
    <property type="chains" value="Y=1-389"/>
</dbReference>
<dbReference type="PDB" id="6MSD">
    <property type="method" value="EM"/>
    <property type="resolution" value="3.20 A"/>
    <property type="chains" value="Y=1-389"/>
</dbReference>
<dbReference type="PDB" id="6MSG">
    <property type="method" value="EM"/>
    <property type="resolution" value="3.50 A"/>
    <property type="chains" value="Y=1-389"/>
</dbReference>
<dbReference type="PDB" id="6MSH">
    <property type="method" value="EM"/>
    <property type="resolution" value="3.60 A"/>
    <property type="chains" value="Y=1-389"/>
</dbReference>
<dbReference type="PDB" id="6MSJ">
    <property type="method" value="EM"/>
    <property type="resolution" value="3.30 A"/>
    <property type="chains" value="Y=1-389"/>
</dbReference>
<dbReference type="PDB" id="6MSK">
    <property type="method" value="EM"/>
    <property type="resolution" value="3.20 A"/>
    <property type="chains" value="Y=1-389"/>
</dbReference>
<dbReference type="PDB" id="6WJD">
    <property type="method" value="EM"/>
    <property type="resolution" value="4.80 A"/>
    <property type="chains" value="Y=1-389"/>
</dbReference>
<dbReference type="PDB" id="6WJN">
    <property type="method" value="EM"/>
    <property type="resolution" value="5.70 A"/>
    <property type="chains" value="Y=12-389"/>
</dbReference>
<dbReference type="PDB" id="7QXN">
    <property type="method" value="EM"/>
    <property type="resolution" value="3.70 A"/>
    <property type="chains" value="Y=1-389"/>
</dbReference>
<dbReference type="PDB" id="7QXP">
    <property type="method" value="EM"/>
    <property type="resolution" value="3.60 A"/>
    <property type="chains" value="Y=1-389"/>
</dbReference>
<dbReference type="PDB" id="7QXU">
    <property type="method" value="EM"/>
    <property type="resolution" value="4.30 A"/>
    <property type="chains" value="Y=1-389"/>
</dbReference>
<dbReference type="PDB" id="7QXW">
    <property type="method" value="EM"/>
    <property type="resolution" value="4.10 A"/>
    <property type="chains" value="Y=1-389"/>
</dbReference>
<dbReference type="PDB" id="7QXX">
    <property type="method" value="EM"/>
    <property type="resolution" value="4.40 A"/>
    <property type="chains" value="Y=1-389"/>
</dbReference>
<dbReference type="PDB" id="7QY7">
    <property type="method" value="EM"/>
    <property type="resolution" value="4.70 A"/>
    <property type="chains" value="Y=1-389"/>
</dbReference>
<dbReference type="PDB" id="7QYA">
    <property type="method" value="EM"/>
    <property type="resolution" value="4.80 A"/>
    <property type="chains" value="Y=1-389"/>
</dbReference>
<dbReference type="PDB" id="7QYB">
    <property type="method" value="EM"/>
    <property type="resolution" value="4.10 A"/>
    <property type="chains" value="Y=1-389"/>
</dbReference>
<dbReference type="PDB" id="7W37">
    <property type="method" value="EM"/>
    <property type="resolution" value="3.00 A"/>
    <property type="chains" value="Y=1-389"/>
</dbReference>
<dbReference type="PDB" id="7W38">
    <property type="method" value="EM"/>
    <property type="resolution" value="3.10 A"/>
    <property type="chains" value="Y=1-389"/>
</dbReference>
<dbReference type="PDB" id="7W39">
    <property type="method" value="EM"/>
    <property type="resolution" value="3.20 A"/>
    <property type="chains" value="Y=1-389"/>
</dbReference>
<dbReference type="PDB" id="7W3A">
    <property type="method" value="EM"/>
    <property type="resolution" value="3.50 A"/>
    <property type="chains" value="Y=1-389"/>
</dbReference>
<dbReference type="PDB" id="7W3B">
    <property type="method" value="EM"/>
    <property type="resolution" value="3.60 A"/>
    <property type="chains" value="Y=1-389"/>
</dbReference>
<dbReference type="PDB" id="7W3C">
    <property type="method" value="EM"/>
    <property type="resolution" value="3.40 A"/>
    <property type="chains" value="Y=1-389"/>
</dbReference>
<dbReference type="PDB" id="7W3F">
    <property type="method" value="EM"/>
    <property type="resolution" value="3.30 A"/>
    <property type="chains" value="Y=1-389"/>
</dbReference>
<dbReference type="PDB" id="7W3G">
    <property type="method" value="EM"/>
    <property type="resolution" value="3.20 A"/>
    <property type="chains" value="Y=1-389"/>
</dbReference>
<dbReference type="PDB" id="7W3H">
    <property type="method" value="EM"/>
    <property type="resolution" value="3.20 A"/>
    <property type="chains" value="Y=1-389"/>
</dbReference>
<dbReference type="PDB" id="7W3I">
    <property type="method" value="EM"/>
    <property type="resolution" value="3.50 A"/>
    <property type="chains" value="Y=1-389"/>
</dbReference>
<dbReference type="PDB" id="7W3J">
    <property type="method" value="EM"/>
    <property type="resolution" value="3.50 A"/>
    <property type="chains" value="Y=1-389"/>
</dbReference>
<dbReference type="PDB" id="7W3K">
    <property type="method" value="EM"/>
    <property type="resolution" value="3.60 A"/>
    <property type="chains" value="Y=1-389"/>
</dbReference>
<dbReference type="PDB" id="7W3M">
    <property type="method" value="EM"/>
    <property type="resolution" value="3.50 A"/>
    <property type="chains" value="Y=1-389"/>
</dbReference>
<dbReference type="PDB" id="8CVT">
    <property type="method" value="EM"/>
    <property type="resolution" value="3.00 A"/>
    <property type="chains" value="Y=1-389"/>
</dbReference>
<dbReference type="PDB" id="8JRI">
    <property type="method" value="EM"/>
    <property type="resolution" value="3.40 A"/>
    <property type="chains" value="Y=1-389"/>
</dbReference>
<dbReference type="PDB" id="8JRT">
    <property type="method" value="EM"/>
    <property type="resolution" value="3.60 A"/>
    <property type="chains" value="Y=1-389"/>
</dbReference>
<dbReference type="PDB" id="8JTI">
    <property type="method" value="EM"/>
    <property type="resolution" value="3.80 A"/>
    <property type="chains" value="Y=1-389"/>
</dbReference>
<dbReference type="PDB" id="8K0G">
    <property type="method" value="EM"/>
    <property type="resolution" value="3.80 A"/>
    <property type="chains" value="Y=1-389"/>
</dbReference>
<dbReference type="PDB" id="8USB">
    <property type="method" value="EM"/>
    <property type="resolution" value="2.73 A"/>
    <property type="chains" value="Y=1-389"/>
</dbReference>
<dbReference type="PDB" id="8USC">
    <property type="method" value="EM"/>
    <property type="resolution" value="3.10 A"/>
    <property type="chains" value="Y=1-389"/>
</dbReference>
<dbReference type="PDB" id="9E8G">
    <property type="method" value="EM"/>
    <property type="resolution" value="3.01 A"/>
    <property type="chains" value="Y=1-389"/>
</dbReference>
<dbReference type="PDB" id="9E8H">
    <property type="method" value="EM"/>
    <property type="resolution" value="2.90 A"/>
    <property type="chains" value="Y=1-389"/>
</dbReference>
<dbReference type="PDB" id="9E8I">
    <property type="method" value="EM"/>
    <property type="resolution" value="2.87 A"/>
    <property type="chains" value="Y=1-389"/>
</dbReference>
<dbReference type="PDB" id="9E8J">
    <property type="method" value="EM"/>
    <property type="resolution" value="3.47 A"/>
    <property type="chains" value="Y=1-389"/>
</dbReference>
<dbReference type="PDB" id="9E8K">
    <property type="method" value="EM"/>
    <property type="resolution" value="4.08 A"/>
    <property type="chains" value="Y=1-389"/>
</dbReference>
<dbReference type="PDB" id="9E8L">
    <property type="method" value="EM"/>
    <property type="resolution" value="3.59 A"/>
    <property type="chains" value="Y=1-389"/>
</dbReference>
<dbReference type="PDB" id="9E8N">
    <property type="method" value="EM"/>
    <property type="resolution" value="3.62 A"/>
    <property type="chains" value="Y=1-389"/>
</dbReference>
<dbReference type="PDB" id="9E8O">
    <property type="method" value="EM"/>
    <property type="resolution" value="3.10 A"/>
    <property type="chains" value="Y=1-389"/>
</dbReference>
<dbReference type="PDB" id="9E8Q">
    <property type="method" value="EM"/>
    <property type="resolution" value="3.16 A"/>
    <property type="chains" value="Y=1-389"/>
</dbReference>
<dbReference type="PDBsum" id="5GJQ"/>
<dbReference type="PDBsum" id="5GJR"/>
<dbReference type="PDBsum" id="5L4K"/>
<dbReference type="PDBsum" id="5LN3"/>
<dbReference type="PDBsum" id="5M32"/>
<dbReference type="PDBsum" id="5T0C"/>
<dbReference type="PDBsum" id="5T0G"/>
<dbReference type="PDBsum" id="5T0H"/>
<dbReference type="PDBsum" id="5T0I"/>
<dbReference type="PDBsum" id="5T0J"/>
<dbReference type="PDBsum" id="5VFP"/>
<dbReference type="PDBsum" id="5VFQ"/>
<dbReference type="PDBsum" id="5VFR"/>
<dbReference type="PDBsum" id="5VFS"/>
<dbReference type="PDBsum" id="5VFT"/>
<dbReference type="PDBsum" id="5VFU"/>
<dbReference type="PDBsum" id="5VGZ"/>
<dbReference type="PDBsum" id="5VHF"/>
<dbReference type="PDBsum" id="5VHH"/>
<dbReference type="PDBsum" id="5VHI"/>
<dbReference type="PDBsum" id="5VHS"/>
<dbReference type="PDBsum" id="6MSB"/>
<dbReference type="PDBsum" id="6MSD"/>
<dbReference type="PDBsum" id="6MSG"/>
<dbReference type="PDBsum" id="6MSH"/>
<dbReference type="PDBsum" id="6MSJ"/>
<dbReference type="PDBsum" id="6MSK"/>
<dbReference type="PDBsum" id="6WJD"/>
<dbReference type="PDBsum" id="6WJN"/>
<dbReference type="PDBsum" id="7QXN"/>
<dbReference type="PDBsum" id="7QXP"/>
<dbReference type="PDBsum" id="7QXU"/>
<dbReference type="PDBsum" id="7QXW"/>
<dbReference type="PDBsum" id="7QXX"/>
<dbReference type="PDBsum" id="7QY7"/>
<dbReference type="PDBsum" id="7QYA"/>
<dbReference type="PDBsum" id="7QYB"/>
<dbReference type="PDBsum" id="7W37"/>
<dbReference type="PDBsum" id="7W38"/>
<dbReference type="PDBsum" id="7W39"/>
<dbReference type="PDBsum" id="7W3A"/>
<dbReference type="PDBsum" id="7W3B"/>
<dbReference type="PDBsum" id="7W3C"/>
<dbReference type="PDBsum" id="7W3F"/>
<dbReference type="PDBsum" id="7W3G"/>
<dbReference type="PDBsum" id="7W3H"/>
<dbReference type="PDBsum" id="7W3I"/>
<dbReference type="PDBsum" id="7W3J"/>
<dbReference type="PDBsum" id="7W3K"/>
<dbReference type="PDBsum" id="7W3M"/>
<dbReference type="PDBsum" id="8CVT"/>
<dbReference type="PDBsum" id="8JRI"/>
<dbReference type="PDBsum" id="8JRT"/>
<dbReference type="PDBsum" id="8JTI"/>
<dbReference type="PDBsum" id="8K0G"/>
<dbReference type="PDBsum" id="8USB"/>
<dbReference type="PDBsum" id="8USC"/>
<dbReference type="PDBsum" id="9E8G"/>
<dbReference type="PDBsum" id="9E8H"/>
<dbReference type="PDBsum" id="9E8I"/>
<dbReference type="PDBsum" id="9E8J"/>
<dbReference type="PDBsum" id="9E8K"/>
<dbReference type="PDBsum" id="9E8L"/>
<dbReference type="PDBsum" id="9E8N"/>
<dbReference type="PDBsum" id="9E8O"/>
<dbReference type="PDBsum" id="9E8Q"/>
<dbReference type="EMDB" id="EMD-14201"/>
<dbReference type="EMDB" id="EMD-14202"/>
<dbReference type="EMDB" id="EMD-14203"/>
<dbReference type="EMDB" id="EMD-14204"/>
<dbReference type="EMDB" id="EMD-14205"/>
<dbReference type="EMDB" id="EMD-14209"/>
<dbReference type="EMDB" id="EMD-14210"/>
<dbReference type="EMDB" id="EMD-14211"/>
<dbReference type="EMDB" id="EMD-21691"/>
<dbReference type="EMDB" id="EMD-21696"/>
<dbReference type="EMDB" id="EMD-27018"/>
<dbReference type="EMDB" id="EMD-32272"/>
<dbReference type="EMDB" id="EMD-32273"/>
<dbReference type="EMDB" id="EMD-32274"/>
<dbReference type="EMDB" id="EMD-32275"/>
<dbReference type="EMDB" id="EMD-32276"/>
<dbReference type="EMDB" id="EMD-32277"/>
<dbReference type="EMDB" id="EMD-32278"/>
<dbReference type="EMDB" id="EMD-32279"/>
<dbReference type="EMDB" id="EMD-32280"/>
<dbReference type="EMDB" id="EMD-32281"/>
<dbReference type="EMDB" id="EMD-32282"/>
<dbReference type="EMDB" id="EMD-32283"/>
<dbReference type="EMDB" id="EMD-32284"/>
<dbReference type="EMDB" id="EMD-36598"/>
<dbReference type="EMDB" id="EMD-36605"/>
<dbReference type="EMDB" id="EMD-36645"/>
<dbReference type="EMDB" id="EMD-36764"/>
<dbReference type="EMDB" id="EMD-4089"/>
<dbReference type="EMDB" id="EMD-4146"/>
<dbReference type="EMDB" id="EMD-42506"/>
<dbReference type="EMDB" id="EMD-42507"/>
<dbReference type="EMDB" id="EMD-47719"/>
<dbReference type="EMDB" id="EMD-47720"/>
<dbReference type="EMDB" id="EMD-47721"/>
<dbReference type="EMDB" id="EMD-47722"/>
<dbReference type="EMDB" id="EMD-47723"/>
<dbReference type="EMDB" id="EMD-47724"/>
<dbReference type="EMDB" id="EMD-47725"/>
<dbReference type="EMDB" id="EMD-47726"/>
<dbReference type="EMDB" id="EMD-47727"/>
<dbReference type="EMDB" id="EMD-60138"/>
<dbReference type="EMDB" id="EMD-60139"/>
<dbReference type="EMDB" id="EMD-8663"/>
<dbReference type="EMDB" id="EMD-8664"/>
<dbReference type="EMDB" id="EMD-8665"/>
<dbReference type="EMDB" id="EMD-8666"/>
<dbReference type="EMDB" id="EMD-8667"/>
<dbReference type="EMDB" id="EMD-8668"/>
<dbReference type="EMDB" id="EMD-8672"/>
<dbReference type="EMDB" id="EMD-8674"/>
<dbReference type="EMDB" id="EMD-8675"/>
<dbReference type="EMDB" id="EMD-8676"/>
<dbReference type="EMDB" id="EMD-8684"/>
<dbReference type="EMDB" id="EMD-9216"/>
<dbReference type="EMDB" id="EMD-9217"/>
<dbReference type="EMDB" id="EMD-9218"/>
<dbReference type="EMDB" id="EMD-9219"/>
<dbReference type="EMDB" id="EMD-9220"/>
<dbReference type="EMDB" id="EMD-9221"/>
<dbReference type="EMDB" id="EMD-9222"/>
<dbReference type="EMDB" id="EMD-9511"/>
<dbReference type="EMDB" id="EMD-9512"/>
<dbReference type="SMR" id="Q15008"/>
<dbReference type="BioGRID" id="115195">
    <property type="interactions" value="329"/>
</dbReference>
<dbReference type="ComplexPortal" id="CPX-5993">
    <property type="entry name" value="26S proteasome complex"/>
</dbReference>
<dbReference type="ComplexPortal" id="CPX-8964">
    <property type="entry name" value="19S proteasome regulatory complex"/>
</dbReference>
<dbReference type="ComplexPortal" id="CPX-9082">
    <property type="entry name" value="19S-20S-PA28-alphabeta hybrid proteasome complex"/>
</dbReference>
<dbReference type="ComplexPortal" id="CPX-9085">
    <property type="entry name" value="19S-20S-PA28-gamma hybrid proteasome complex"/>
</dbReference>
<dbReference type="ComplexPortal" id="CPX-9086">
    <property type="entry name" value="30S proteasome complex"/>
</dbReference>
<dbReference type="CORUM" id="Q15008"/>
<dbReference type="DIP" id="DIP-27590N"/>
<dbReference type="FunCoup" id="Q15008">
    <property type="interactions" value="2228"/>
</dbReference>
<dbReference type="IntAct" id="Q15008">
    <property type="interactions" value="130"/>
</dbReference>
<dbReference type="MINT" id="Q15008"/>
<dbReference type="STRING" id="9606.ENSP00000418695"/>
<dbReference type="ChEMBL" id="CHEMBL2364701"/>
<dbReference type="GlyGen" id="Q15008">
    <property type="glycosylation" value="1 site, 1 O-linked glycan (1 site)"/>
</dbReference>
<dbReference type="iPTMnet" id="Q15008"/>
<dbReference type="MetOSite" id="Q15008"/>
<dbReference type="PhosphoSitePlus" id="Q15008"/>
<dbReference type="SwissPalm" id="Q15008"/>
<dbReference type="BioMuta" id="PSMD6"/>
<dbReference type="DMDM" id="2494625"/>
<dbReference type="jPOST" id="Q15008"/>
<dbReference type="MassIVE" id="Q15008"/>
<dbReference type="PeptideAtlas" id="Q15008"/>
<dbReference type="ProteomicsDB" id="20548"/>
<dbReference type="ProteomicsDB" id="60360">
    <molecule id="Q15008-1"/>
</dbReference>
<dbReference type="ProteomicsDB" id="67429"/>
<dbReference type="Pumba" id="Q15008"/>
<dbReference type="TopDownProteomics" id="Q15008-1">
    <molecule id="Q15008-1"/>
</dbReference>
<dbReference type="Antibodypedia" id="31765">
    <property type="antibodies" value="302 antibodies from 33 providers"/>
</dbReference>
<dbReference type="DNASU" id="9861"/>
<dbReference type="Ensembl" id="ENST00000295901.9">
    <molecule id="Q15008-1"/>
    <property type="protein sequence ID" value="ENSP00000295901.4"/>
    <property type="gene ID" value="ENSG00000163636.11"/>
</dbReference>
<dbReference type="Ensembl" id="ENST00000394431.6">
    <molecule id="Q15008-2"/>
    <property type="protein sequence ID" value="ENSP00000377952.2"/>
    <property type="gene ID" value="ENSG00000163636.11"/>
</dbReference>
<dbReference type="Ensembl" id="ENST00000482510.5">
    <molecule id="Q15008-3"/>
    <property type="protein sequence ID" value="ENSP00000419227.1"/>
    <property type="gene ID" value="ENSG00000163636.11"/>
</dbReference>
<dbReference type="Ensembl" id="ENST00000492933.5">
    <molecule id="Q15008-4"/>
    <property type="protein sequence ID" value="ENSP00000418695.1"/>
    <property type="gene ID" value="ENSG00000163636.11"/>
</dbReference>
<dbReference type="GeneID" id="9861"/>
<dbReference type="KEGG" id="hsa:9861"/>
<dbReference type="MANE-Select" id="ENST00000295901.9">
    <property type="protein sequence ID" value="ENSP00000295901.4"/>
    <property type="RefSeq nucleotide sequence ID" value="NM_014814.3"/>
    <property type="RefSeq protein sequence ID" value="NP_055629.1"/>
</dbReference>
<dbReference type="UCSC" id="uc003dma.3">
    <molecule id="Q15008-1"/>
    <property type="organism name" value="human"/>
</dbReference>
<dbReference type="AGR" id="HGNC:9564"/>
<dbReference type="CTD" id="9861"/>
<dbReference type="DisGeNET" id="9861"/>
<dbReference type="GeneCards" id="PSMD6"/>
<dbReference type="HGNC" id="HGNC:9564">
    <property type="gene designation" value="PSMD6"/>
</dbReference>
<dbReference type="HPA" id="ENSG00000163636">
    <property type="expression patterns" value="Tissue enhanced (pancreas)"/>
</dbReference>
<dbReference type="MIM" id="617857">
    <property type="type" value="gene"/>
</dbReference>
<dbReference type="neXtProt" id="NX_Q15008"/>
<dbReference type="OpenTargets" id="ENSG00000163636"/>
<dbReference type="PharmGKB" id="PA33910"/>
<dbReference type="VEuPathDB" id="HostDB:ENSG00000163636"/>
<dbReference type="GeneTree" id="ENSGT00510000046608"/>
<dbReference type="HOGENOM" id="CLU_031814_0_0_1"/>
<dbReference type="InParanoid" id="Q15008"/>
<dbReference type="OMA" id="RLHCKVD"/>
<dbReference type="OrthoDB" id="1452at2759"/>
<dbReference type="PAN-GO" id="Q15008">
    <property type="GO annotations" value="2 GO annotations based on evolutionary models"/>
</dbReference>
<dbReference type="PhylomeDB" id="Q15008"/>
<dbReference type="TreeFam" id="TF313819"/>
<dbReference type="PathwayCommons" id="Q15008"/>
<dbReference type="Reactome" id="R-HSA-1169091">
    <property type="pathway name" value="Activation of NF-kappaB in B cells"/>
</dbReference>
<dbReference type="Reactome" id="R-HSA-1234176">
    <property type="pathway name" value="Oxygen-dependent proline hydroxylation of Hypoxia-inducible Factor Alpha"/>
</dbReference>
<dbReference type="Reactome" id="R-HSA-1236974">
    <property type="pathway name" value="ER-Phagosome pathway"/>
</dbReference>
<dbReference type="Reactome" id="R-HSA-1236978">
    <property type="pathway name" value="Cross-presentation of soluble exogenous antigens (endosomes)"/>
</dbReference>
<dbReference type="Reactome" id="R-HSA-174084">
    <property type="pathway name" value="Autodegradation of Cdh1 by Cdh1:APC/C"/>
</dbReference>
<dbReference type="Reactome" id="R-HSA-174113">
    <property type="pathway name" value="SCF-beta-TrCP mediated degradation of Emi1"/>
</dbReference>
<dbReference type="Reactome" id="R-HSA-174154">
    <property type="pathway name" value="APC/C:Cdc20 mediated degradation of Securin"/>
</dbReference>
<dbReference type="Reactome" id="R-HSA-174178">
    <property type="pathway name" value="APC/C:Cdh1 mediated degradation of Cdc20 and other APC/C:Cdh1 targeted proteins in late mitosis/early G1"/>
</dbReference>
<dbReference type="Reactome" id="R-HSA-174184">
    <property type="pathway name" value="Cdc20:Phospho-APC/C mediated degradation of Cyclin A"/>
</dbReference>
<dbReference type="Reactome" id="R-HSA-180534">
    <property type="pathway name" value="Vpu mediated degradation of CD4"/>
</dbReference>
<dbReference type="Reactome" id="R-HSA-180585">
    <property type="pathway name" value="Vif-mediated degradation of APOBEC3G"/>
</dbReference>
<dbReference type="Reactome" id="R-HSA-187577">
    <property type="pathway name" value="SCF(Skp2)-mediated degradation of p27/p21"/>
</dbReference>
<dbReference type="Reactome" id="R-HSA-195253">
    <property type="pathway name" value="Degradation of beta-catenin by the destruction complex"/>
</dbReference>
<dbReference type="Reactome" id="R-HSA-202424">
    <property type="pathway name" value="Downstream TCR signaling"/>
</dbReference>
<dbReference type="Reactome" id="R-HSA-211733">
    <property type="pathway name" value="Regulation of activated PAK-2p34 by proteasome mediated degradation"/>
</dbReference>
<dbReference type="Reactome" id="R-HSA-2467813">
    <property type="pathway name" value="Separation of Sister Chromatids"/>
</dbReference>
<dbReference type="Reactome" id="R-HSA-2871837">
    <property type="pathway name" value="FCERI mediated NF-kB activation"/>
</dbReference>
<dbReference type="Reactome" id="R-HSA-349425">
    <property type="pathway name" value="Autodegradation of the E3 ubiquitin ligase COP1"/>
</dbReference>
<dbReference type="Reactome" id="R-HSA-350562">
    <property type="pathway name" value="Regulation of ornithine decarboxylase (ODC)"/>
</dbReference>
<dbReference type="Reactome" id="R-HSA-382556">
    <property type="pathway name" value="ABC-family proteins mediated transport"/>
</dbReference>
<dbReference type="Reactome" id="R-HSA-450408">
    <property type="pathway name" value="AUF1 (hnRNP D0) binds and destabilizes mRNA"/>
</dbReference>
<dbReference type="Reactome" id="R-HSA-4608870">
    <property type="pathway name" value="Asymmetric localization of PCP proteins"/>
</dbReference>
<dbReference type="Reactome" id="R-HSA-4641257">
    <property type="pathway name" value="Degradation of AXIN"/>
</dbReference>
<dbReference type="Reactome" id="R-HSA-4641258">
    <property type="pathway name" value="Degradation of DVL"/>
</dbReference>
<dbReference type="Reactome" id="R-HSA-5358346">
    <property type="pathway name" value="Hedgehog ligand biogenesis"/>
</dbReference>
<dbReference type="Reactome" id="R-HSA-5362768">
    <property type="pathway name" value="Hh mutants are degraded by ERAD"/>
</dbReference>
<dbReference type="Reactome" id="R-HSA-5607761">
    <property type="pathway name" value="Dectin-1 mediated noncanonical NF-kB signaling"/>
</dbReference>
<dbReference type="Reactome" id="R-HSA-5607764">
    <property type="pathway name" value="CLEC7A (Dectin-1) signaling"/>
</dbReference>
<dbReference type="Reactome" id="R-HSA-5610780">
    <property type="pathway name" value="Degradation of GLI1 by the proteasome"/>
</dbReference>
<dbReference type="Reactome" id="R-HSA-5610783">
    <property type="pathway name" value="Degradation of GLI2 by the proteasome"/>
</dbReference>
<dbReference type="Reactome" id="R-HSA-5610785">
    <property type="pathway name" value="GLI3 is processed to GLI3R by the proteasome"/>
</dbReference>
<dbReference type="Reactome" id="R-HSA-5632684">
    <property type="pathway name" value="Hedgehog 'on' state"/>
</dbReference>
<dbReference type="Reactome" id="R-HSA-5658442">
    <property type="pathway name" value="Regulation of RAS by GAPs"/>
</dbReference>
<dbReference type="Reactome" id="R-HSA-5668541">
    <property type="pathway name" value="TNFR2 non-canonical NF-kB pathway"/>
</dbReference>
<dbReference type="Reactome" id="R-HSA-5676590">
    <property type="pathway name" value="NIK--&gt;noncanonical NF-kB signaling"/>
</dbReference>
<dbReference type="Reactome" id="R-HSA-5678895">
    <property type="pathway name" value="Defective CFTR causes cystic fibrosis"/>
</dbReference>
<dbReference type="Reactome" id="R-HSA-5687128">
    <property type="pathway name" value="MAPK6/MAPK4 signaling"/>
</dbReference>
<dbReference type="Reactome" id="R-HSA-5689603">
    <property type="pathway name" value="UCH proteinases"/>
</dbReference>
<dbReference type="Reactome" id="R-HSA-5689880">
    <property type="pathway name" value="Ub-specific processing proteases"/>
</dbReference>
<dbReference type="Reactome" id="R-HSA-6798695">
    <property type="pathway name" value="Neutrophil degranulation"/>
</dbReference>
<dbReference type="Reactome" id="R-HSA-68867">
    <property type="pathway name" value="Assembly of the pre-replicative complex"/>
</dbReference>
<dbReference type="Reactome" id="R-HSA-68949">
    <property type="pathway name" value="Orc1 removal from chromatin"/>
</dbReference>
<dbReference type="Reactome" id="R-HSA-69017">
    <property type="pathway name" value="CDK-mediated phosphorylation and removal of Cdc6"/>
</dbReference>
<dbReference type="Reactome" id="R-HSA-69481">
    <property type="pathway name" value="G2/M Checkpoints"/>
</dbReference>
<dbReference type="Reactome" id="R-HSA-69601">
    <property type="pathway name" value="Ubiquitin Mediated Degradation of Phosphorylated Cdc25A"/>
</dbReference>
<dbReference type="Reactome" id="R-HSA-75815">
    <property type="pathway name" value="Ubiquitin-dependent degradation of Cyclin D"/>
</dbReference>
<dbReference type="Reactome" id="R-HSA-8852276">
    <property type="pathway name" value="The role of GTSE1 in G2/M progression after G2 checkpoint"/>
</dbReference>
<dbReference type="Reactome" id="R-HSA-8854050">
    <property type="pathway name" value="FBXL7 down-regulates AURKA during mitotic entry and in early mitosis"/>
</dbReference>
<dbReference type="Reactome" id="R-HSA-8939236">
    <property type="pathway name" value="RUNX1 regulates transcription of genes involved in differentiation of HSCs"/>
</dbReference>
<dbReference type="Reactome" id="R-HSA-8939902">
    <property type="pathway name" value="Regulation of RUNX2 expression and activity"/>
</dbReference>
<dbReference type="Reactome" id="R-HSA-8941858">
    <property type="pathway name" value="Regulation of RUNX3 expression and activity"/>
</dbReference>
<dbReference type="Reactome" id="R-HSA-8948751">
    <property type="pathway name" value="Regulation of PTEN stability and activity"/>
</dbReference>
<dbReference type="Reactome" id="R-HSA-8951664">
    <property type="pathway name" value="Neddylation"/>
</dbReference>
<dbReference type="Reactome" id="R-HSA-9010553">
    <property type="pathway name" value="Regulation of expression of SLITs and ROBOs"/>
</dbReference>
<dbReference type="Reactome" id="R-HSA-9020702">
    <property type="pathway name" value="Interleukin-1 signaling"/>
</dbReference>
<dbReference type="Reactome" id="R-HSA-9604323">
    <property type="pathway name" value="Negative regulation of NOTCH4 signaling"/>
</dbReference>
<dbReference type="Reactome" id="R-HSA-9755511">
    <property type="pathway name" value="KEAP1-NFE2L2 pathway"/>
</dbReference>
<dbReference type="Reactome" id="R-HSA-9762114">
    <property type="pathway name" value="GSK3B and BTRC:CUL1-mediated-degradation of NFE2L2"/>
</dbReference>
<dbReference type="Reactome" id="R-HSA-9824272">
    <property type="pathway name" value="Somitogenesis"/>
</dbReference>
<dbReference type="Reactome" id="R-HSA-983168">
    <property type="pathway name" value="Antigen processing: Ubiquitination &amp; Proteasome degradation"/>
</dbReference>
<dbReference type="Reactome" id="R-HSA-9907900">
    <property type="pathway name" value="Proteasome assembly"/>
</dbReference>
<dbReference type="SignaLink" id="Q15008"/>
<dbReference type="SIGNOR" id="Q15008"/>
<dbReference type="BioGRID-ORCS" id="9861">
    <property type="hits" value="820 hits in 1166 CRISPR screens"/>
</dbReference>
<dbReference type="CD-CODE" id="91857CE7">
    <property type="entry name" value="Nucleolus"/>
</dbReference>
<dbReference type="ChiTaRS" id="PSMD6">
    <property type="organism name" value="human"/>
</dbReference>
<dbReference type="GeneWiki" id="PSMD6"/>
<dbReference type="GenomeRNAi" id="9861"/>
<dbReference type="Pharos" id="Q15008">
    <property type="development level" value="Tbio"/>
</dbReference>
<dbReference type="PRO" id="PR:Q15008"/>
<dbReference type="Proteomes" id="UP000005640">
    <property type="component" value="Chromosome 3"/>
</dbReference>
<dbReference type="RNAct" id="Q15008">
    <property type="molecule type" value="protein"/>
</dbReference>
<dbReference type="Bgee" id="ENSG00000163636">
    <property type="expression patterns" value="Expressed in endometrium epithelium and 208 other cell types or tissues"/>
</dbReference>
<dbReference type="ExpressionAtlas" id="Q15008">
    <property type="expression patterns" value="baseline and differential"/>
</dbReference>
<dbReference type="GO" id="GO:0005829">
    <property type="term" value="C:cytosol"/>
    <property type="evidence" value="ECO:0000304"/>
    <property type="project" value="Reactome"/>
</dbReference>
<dbReference type="GO" id="GO:0005576">
    <property type="term" value="C:extracellular region"/>
    <property type="evidence" value="ECO:0000304"/>
    <property type="project" value="Reactome"/>
</dbReference>
<dbReference type="GO" id="GO:1904813">
    <property type="term" value="C:ficolin-1-rich granule lumen"/>
    <property type="evidence" value="ECO:0000304"/>
    <property type="project" value="Reactome"/>
</dbReference>
<dbReference type="GO" id="GO:0005654">
    <property type="term" value="C:nucleoplasm"/>
    <property type="evidence" value="ECO:0000304"/>
    <property type="project" value="Reactome"/>
</dbReference>
<dbReference type="GO" id="GO:0022624">
    <property type="term" value="C:proteasome accessory complex"/>
    <property type="evidence" value="ECO:0000250"/>
    <property type="project" value="UniProtKB"/>
</dbReference>
<dbReference type="GO" id="GO:0000502">
    <property type="term" value="C:proteasome complex"/>
    <property type="evidence" value="ECO:0000314"/>
    <property type="project" value="UniProtKB"/>
</dbReference>
<dbReference type="GO" id="GO:0005838">
    <property type="term" value="C:proteasome regulatory particle"/>
    <property type="evidence" value="ECO:0000318"/>
    <property type="project" value="GO_Central"/>
</dbReference>
<dbReference type="GO" id="GO:0034774">
    <property type="term" value="C:secretory granule lumen"/>
    <property type="evidence" value="ECO:0000304"/>
    <property type="project" value="Reactome"/>
</dbReference>
<dbReference type="GO" id="GO:0043161">
    <property type="term" value="P:proteasome-mediated ubiquitin-dependent protein catabolic process"/>
    <property type="evidence" value="ECO:0000318"/>
    <property type="project" value="GO_Central"/>
</dbReference>
<dbReference type="FunFam" id="1.25.40.570:FF:000004">
    <property type="entry name" value="26S proteasome non-ATPase regulatory subunit 6"/>
    <property type="match status" value="1"/>
</dbReference>
<dbReference type="Gene3D" id="1.25.40.570">
    <property type="match status" value="1"/>
</dbReference>
<dbReference type="InterPro" id="IPR000717">
    <property type="entry name" value="PCI_dom"/>
</dbReference>
<dbReference type="InterPro" id="IPR019585">
    <property type="entry name" value="Rpn7/CSN1"/>
</dbReference>
<dbReference type="InterPro" id="IPR045135">
    <property type="entry name" value="Rpn7_N"/>
</dbReference>
<dbReference type="InterPro" id="IPR049549">
    <property type="entry name" value="RPN7_PSMD6_C"/>
</dbReference>
<dbReference type="InterPro" id="IPR011990">
    <property type="entry name" value="TPR-like_helical_dom_sf"/>
</dbReference>
<dbReference type="InterPro" id="IPR036390">
    <property type="entry name" value="WH_DNA-bd_sf"/>
</dbReference>
<dbReference type="PANTHER" id="PTHR14145:SF1">
    <property type="entry name" value="26S PROTEASOME NON-ATPASE REGULATORY SUBUNIT 6"/>
    <property type="match status" value="1"/>
</dbReference>
<dbReference type="PANTHER" id="PTHR14145">
    <property type="entry name" value="26S PROTESOME SUBUNIT 6"/>
    <property type="match status" value="1"/>
</dbReference>
<dbReference type="Pfam" id="PF01399">
    <property type="entry name" value="PCI"/>
    <property type="match status" value="1"/>
</dbReference>
<dbReference type="Pfam" id="PF10602">
    <property type="entry name" value="RPN7"/>
    <property type="match status" value="1"/>
</dbReference>
<dbReference type="Pfam" id="PF21154">
    <property type="entry name" value="RPN7_PSMD6_C"/>
    <property type="match status" value="1"/>
</dbReference>
<dbReference type="SMART" id="SM00088">
    <property type="entry name" value="PINT"/>
    <property type="match status" value="1"/>
</dbReference>
<dbReference type="SUPFAM" id="SSF48452">
    <property type="entry name" value="TPR-like"/>
    <property type="match status" value="1"/>
</dbReference>
<dbReference type="SUPFAM" id="SSF46785">
    <property type="entry name" value="Winged helix' DNA-binding domain"/>
    <property type="match status" value="1"/>
</dbReference>
<dbReference type="PROSITE" id="PS50250">
    <property type="entry name" value="PCI"/>
    <property type="match status" value="1"/>
</dbReference>
<proteinExistence type="evidence at protein level"/>
<comment type="function">
    <text evidence="2">Component of the 26S proteasome, a multiprotein complex involved in the ATP-dependent degradation of ubiquitinated proteins. This complex plays a key role in the maintenance of protein homeostasis by removing misfolded or damaged proteins, which could impair cellular functions, and by removing proteins whose functions are no longer required. Therefore, the proteasome participates in numerous cellular processes, including cell cycle progression, apoptosis, or DNA damage repair.</text>
</comment>
<comment type="subunit">
    <text evidence="3 4">Component of the 19S proteasome regulatory particle complex. The 26S proteasome consists of a 20S core particle (CP) and two 19S regulatory subunits (RP). The regulatory particle is made of a lid composed of 9 subunits including PSMD6, a base containing 6 ATPases and few additional components.</text>
</comment>
<comment type="interaction">
    <interactant intactId="EBI-359701">
        <id>Q15008</id>
    </interactant>
    <interactant intactId="EBI-2807956">
        <id>Q96FZ5</id>
        <label>CMTM7</label>
    </interactant>
    <organismsDiffer>false</organismsDiffer>
    <experiments>3</experiments>
</comment>
<comment type="interaction">
    <interactant intactId="EBI-359701">
        <id>Q15008</id>
    </interactant>
    <interactant intactId="EBI-739467">
        <id>Q9H8Y8</id>
        <label>GORASP2</label>
    </interactant>
    <organismsDiffer>false</organismsDiffer>
    <experiments>5</experiments>
</comment>
<comment type="interaction">
    <interactant intactId="EBI-359701">
        <id>Q15008</id>
    </interactant>
    <interactant intactId="EBI-359318">
        <id>P55036</id>
        <label>PSMD4</label>
    </interactant>
    <organismsDiffer>false</organismsDiffer>
    <experiments>4</experiments>
</comment>
<comment type="interaction">
    <interactant intactId="EBI-359701">
        <id>Q15008</id>
    </interactant>
    <interactant intactId="EBI-741480">
        <id>Q9UMX0</id>
        <label>UBQLN1</label>
    </interactant>
    <organismsDiffer>false</organismsDiffer>
    <experiments>3</experiments>
</comment>
<comment type="interaction">
    <interactant intactId="EBI-359701">
        <id>Q15008</id>
    </interactant>
    <interactant intactId="EBI-10173939">
        <id>Q9UMX0-2</id>
        <label>UBQLN1</label>
    </interactant>
    <organismsDiffer>false</organismsDiffer>
    <experiments>3</experiments>
</comment>
<comment type="alternative products">
    <event type="alternative splicing"/>
    <isoform>
        <id>Q15008-1</id>
        <name>1</name>
        <sequence type="displayed"/>
    </isoform>
    <isoform>
        <id>Q15008-2</id>
        <name>2</name>
        <sequence type="described" ref="VSP_047711"/>
    </isoform>
    <isoform>
        <id>Q15008-3</id>
        <name>3</name>
        <sequence type="described" ref="VSP_055177"/>
    </isoform>
    <isoform>
        <id>Q15008-4</id>
        <name>4</name>
        <sequence type="described" ref="VSP_055178"/>
    </isoform>
</comment>
<comment type="similarity">
    <text evidence="7">Belongs to the proteasome subunit S10 family.</text>
</comment>
<evidence type="ECO:0000255" key="1">
    <source>
        <dbReference type="PROSITE-ProRule" id="PRU01185"/>
    </source>
</evidence>
<evidence type="ECO:0000269" key="2">
    <source>
    </source>
</evidence>
<evidence type="ECO:0000269" key="3">
    <source>
    </source>
</evidence>
<evidence type="ECO:0000269" key="4">
    <source>
    </source>
</evidence>
<evidence type="ECO:0000303" key="5">
    <source>
    </source>
</evidence>
<evidence type="ECO:0000303" key="6">
    <source ref="3"/>
</evidence>
<evidence type="ECO:0000305" key="7"/>
<evidence type="ECO:0007744" key="8">
    <source>
    </source>
</evidence>
<evidence type="ECO:0007829" key="9">
    <source>
        <dbReference type="PDB" id="9E8J"/>
    </source>
</evidence>
<gene>
    <name type="primary">PSMD6</name>
    <name type="synonym">KIAA0107</name>
    <name type="synonym">PFAAP4</name>
</gene>
<reference key="1">
    <citation type="journal article" date="2000" name="Oncogene">
        <title>The p44S10 locus, encoding a subunit of the proteasome regulatory particle, is amplified during progression of cutaneous malignant melanoma.</title>
        <authorList>
            <person name="Ren S."/>
            <person name="Smith M.J."/>
            <person name="Louro I.D."/>
            <person name="McKie-Bell P."/>
            <person name="Bani M.R."/>
            <person name="Wagner M."/>
            <person name="Zochodne B."/>
            <person name="Redden D.T."/>
            <person name="Grizzle W.E."/>
            <person name="Wang N.D."/>
            <person name="Smith D.I."/>
            <person name="Herbst R.A."/>
            <person name="Bardenheuer W."/>
            <person name="Opalka B."/>
            <person name="Schutte J."/>
            <person name="Trent J.M."/>
            <person name="Ben-David Y."/>
            <person name="Ruppert J.M."/>
        </authorList>
    </citation>
    <scope>NUCLEOTIDE SEQUENCE [MRNA] (ISOFORM 1)</scope>
    <source>
        <tissue>Mammary cancer</tissue>
    </source>
</reference>
<reference key="2">
    <citation type="submission" date="2002-07" db="EMBL/GenBank/DDBJ databases">
        <title>Screening and cloning of a new immuno-associated gene regulated by phosphonoformate.</title>
        <authorList>
            <person name="Liu Y."/>
            <person name="Cheng J."/>
            <person name="Lu Y."/>
        </authorList>
    </citation>
    <scope>NUCLEOTIDE SEQUENCE [MRNA] (ISOFORM 1)</scope>
</reference>
<reference key="3">
    <citation type="submission" date="2003-08" db="EMBL/GenBank/DDBJ databases">
        <title>Cloning of an isoform of KIAA0107 gene related to spermatogenesis.</title>
        <authorList>
            <person name="Gu A.H."/>
            <person name="Wang H."/>
            <person name="Fang X."/>
            <person name="Lu L."/>
            <person name="Xu Z.Y."/>
            <person name="Xu M."/>
            <person name="Yin L.L."/>
            <person name="Li J.M."/>
            <person name="Zhou Z.M."/>
            <person name="Sha J.H."/>
        </authorList>
    </citation>
    <scope>NUCLEOTIDE SEQUENCE [MRNA] (ISOFORM 2)</scope>
    <scope>ALTERNATIVE SPLICING</scope>
    <source>
        <tissue>Testis</tissue>
    </source>
</reference>
<reference key="4">
    <citation type="submission" date="2004-03" db="EMBL/GenBank/DDBJ databases">
        <title>Breast cancer associated protein.</title>
        <authorList>
            <person name="Petroziello J.M."/>
        </authorList>
    </citation>
    <scope>NUCLEOTIDE SEQUENCE [MRNA] (ISOFORM 1)</scope>
</reference>
<reference key="5">
    <citation type="journal article" date="1995" name="DNA Res.">
        <title>Prediction of the coding sequences of unidentified human genes. III. The coding sequences of 40 new genes (KIAA0081-KIAA0120) deduced by analysis of cDNA clones from human cell line KG-1.</title>
        <authorList>
            <person name="Nagase T."/>
            <person name="Miyajima N."/>
            <person name="Tanaka A."/>
            <person name="Sazuka T."/>
            <person name="Seki N."/>
            <person name="Sato S."/>
            <person name="Tabata S."/>
            <person name="Ishikawa K."/>
            <person name="Kawarabayasi Y."/>
            <person name="Kotani H."/>
            <person name="Nomura N."/>
        </authorList>
    </citation>
    <scope>NUCLEOTIDE SEQUENCE [LARGE SCALE MRNA] (ISOFORM 1)</scope>
    <source>
        <tissue>Bone marrow</tissue>
    </source>
</reference>
<reference key="6">
    <citation type="journal article" date="2007" name="BMC Genomics">
        <title>The full-ORF clone resource of the German cDNA consortium.</title>
        <authorList>
            <person name="Bechtel S."/>
            <person name="Rosenfelder H."/>
            <person name="Duda A."/>
            <person name="Schmidt C.P."/>
            <person name="Ernst U."/>
            <person name="Wellenreuther R."/>
            <person name="Mehrle A."/>
            <person name="Schuster C."/>
            <person name="Bahr A."/>
            <person name="Bloecker H."/>
            <person name="Heubner D."/>
            <person name="Hoerlein A."/>
            <person name="Michel G."/>
            <person name="Wedler H."/>
            <person name="Koehrer K."/>
            <person name="Ottenwaelder B."/>
            <person name="Poustka A."/>
            <person name="Wiemann S."/>
            <person name="Schupp I."/>
        </authorList>
    </citation>
    <scope>NUCLEOTIDE SEQUENCE [LARGE SCALE MRNA] (ISOFORM 4)</scope>
</reference>
<reference key="7">
    <citation type="journal article" date="2004" name="Nat. Genet.">
        <title>Complete sequencing and characterization of 21,243 full-length human cDNAs.</title>
        <authorList>
            <person name="Ota T."/>
            <person name="Suzuki Y."/>
            <person name="Nishikawa T."/>
            <person name="Otsuki T."/>
            <person name="Sugiyama T."/>
            <person name="Irie R."/>
            <person name="Wakamatsu A."/>
            <person name="Hayashi K."/>
            <person name="Sato H."/>
            <person name="Nagai K."/>
            <person name="Kimura K."/>
            <person name="Makita H."/>
            <person name="Sekine M."/>
            <person name="Obayashi M."/>
            <person name="Nishi T."/>
            <person name="Shibahara T."/>
            <person name="Tanaka T."/>
            <person name="Ishii S."/>
            <person name="Yamamoto J."/>
            <person name="Saito K."/>
            <person name="Kawai Y."/>
            <person name="Isono Y."/>
            <person name="Nakamura Y."/>
            <person name="Nagahari K."/>
            <person name="Murakami K."/>
            <person name="Yasuda T."/>
            <person name="Iwayanagi T."/>
            <person name="Wagatsuma M."/>
            <person name="Shiratori A."/>
            <person name="Sudo H."/>
            <person name="Hosoiri T."/>
            <person name="Kaku Y."/>
            <person name="Kodaira H."/>
            <person name="Kondo H."/>
            <person name="Sugawara M."/>
            <person name="Takahashi M."/>
            <person name="Kanda K."/>
            <person name="Yokoi T."/>
            <person name="Furuya T."/>
            <person name="Kikkawa E."/>
            <person name="Omura Y."/>
            <person name="Abe K."/>
            <person name="Kamihara K."/>
            <person name="Katsuta N."/>
            <person name="Sato K."/>
            <person name="Tanikawa M."/>
            <person name="Yamazaki M."/>
            <person name="Ninomiya K."/>
            <person name="Ishibashi T."/>
            <person name="Yamashita H."/>
            <person name="Murakawa K."/>
            <person name="Fujimori K."/>
            <person name="Tanai H."/>
            <person name="Kimata M."/>
            <person name="Watanabe M."/>
            <person name="Hiraoka S."/>
            <person name="Chiba Y."/>
            <person name="Ishida S."/>
            <person name="Ono Y."/>
            <person name="Takiguchi S."/>
            <person name="Watanabe S."/>
            <person name="Yosida M."/>
            <person name="Hotuta T."/>
            <person name="Kusano J."/>
            <person name="Kanehori K."/>
            <person name="Takahashi-Fujii A."/>
            <person name="Hara H."/>
            <person name="Tanase T.-O."/>
            <person name="Nomura Y."/>
            <person name="Togiya S."/>
            <person name="Komai F."/>
            <person name="Hara R."/>
            <person name="Takeuchi K."/>
            <person name="Arita M."/>
            <person name="Imose N."/>
            <person name="Musashino K."/>
            <person name="Yuuki H."/>
            <person name="Oshima A."/>
            <person name="Sasaki N."/>
            <person name="Aotsuka S."/>
            <person name="Yoshikawa Y."/>
            <person name="Matsunawa H."/>
            <person name="Ichihara T."/>
            <person name="Shiohata N."/>
            <person name="Sano S."/>
            <person name="Moriya S."/>
            <person name="Momiyama H."/>
            <person name="Satoh N."/>
            <person name="Takami S."/>
            <person name="Terashima Y."/>
            <person name="Suzuki O."/>
            <person name="Nakagawa S."/>
            <person name="Senoh A."/>
            <person name="Mizoguchi H."/>
            <person name="Goto Y."/>
            <person name="Shimizu F."/>
            <person name="Wakebe H."/>
            <person name="Hishigaki H."/>
            <person name="Watanabe T."/>
            <person name="Sugiyama A."/>
            <person name="Takemoto M."/>
            <person name="Kawakami B."/>
            <person name="Yamazaki M."/>
            <person name="Watanabe K."/>
            <person name="Kumagai A."/>
            <person name="Itakura S."/>
            <person name="Fukuzumi Y."/>
            <person name="Fujimori Y."/>
            <person name="Komiyama M."/>
            <person name="Tashiro H."/>
            <person name="Tanigami A."/>
            <person name="Fujiwara T."/>
            <person name="Ono T."/>
            <person name="Yamada K."/>
            <person name="Fujii Y."/>
            <person name="Ozaki K."/>
            <person name="Hirao M."/>
            <person name="Ohmori Y."/>
            <person name="Kawabata A."/>
            <person name="Hikiji T."/>
            <person name="Kobatake N."/>
            <person name="Inagaki H."/>
            <person name="Ikema Y."/>
            <person name="Okamoto S."/>
            <person name="Okitani R."/>
            <person name="Kawakami T."/>
            <person name="Noguchi S."/>
            <person name="Itoh T."/>
            <person name="Shigeta K."/>
            <person name="Senba T."/>
            <person name="Matsumura K."/>
            <person name="Nakajima Y."/>
            <person name="Mizuno T."/>
            <person name="Morinaga M."/>
            <person name="Sasaki M."/>
            <person name="Togashi T."/>
            <person name="Oyama M."/>
            <person name="Hata H."/>
            <person name="Watanabe M."/>
            <person name="Komatsu T."/>
            <person name="Mizushima-Sugano J."/>
            <person name="Satoh T."/>
            <person name="Shirai Y."/>
            <person name="Takahashi Y."/>
            <person name="Nakagawa K."/>
            <person name="Okumura K."/>
            <person name="Nagase T."/>
            <person name="Nomura N."/>
            <person name="Kikuchi H."/>
            <person name="Masuho Y."/>
            <person name="Yamashita R."/>
            <person name="Nakai K."/>
            <person name="Yada T."/>
            <person name="Nakamura Y."/>
            <person name="Ohara O."/>
            <person name="Isogai T."/>
            <person name="Sugano S."/>
        </authorList>
    </citation>
    <scope>NUCLEOTIDE SEQUENCE [LARGE SCALE MRNA] (ISOFORM 1)</scope>
    <source>
        <tissue>Thalamus</tissue>
    </source>
</reference>
<reference key="8">
    <citation type="journal article" date="2006" name="Nature">
        <title>The DNA sequence, annotation and analysis of human chromosome 3.</title>
        <authorList>
            <person name="Muzny D.M."/>
            <person name="Scherer S.E."/>
            <person name="Kaul R."/>
            <person name="Wang J."/>
            <person name="Yu J."/>
            <person name="Sudbrak R."/>
            <person name="Buhay C.J."/>
            <person name="Chen R."/>
            <person name="Cree A."/>
            <person name="Ding Y."/>
            <person name="Dugan-Rocha S."/>
            <person name="Gill R."/>
            <person name="Gunaratne P."/>
            <person name="Harris R.A."/>
            <person name="Hawes A.C."/>
            <person name="Hernandez J."/>
            <person name="Hodgson A.V."/>
            <person name="Hume J."/>
            <person name="Jackson A."/>
            <person name="Khan Z.M."/>
            <person name="Kovar-Smith C."/>
            <person name="Lewis L.R."/>
            <person name="Lozado R.J."/>
            <person name="Metzker M.L."/>
            <person name="Milosavljevic A."/>
            <person name="Miner G.R."/>
            <person name="Morgan M.B."/>
            <person name="Nazareth L.V."/>
            <person name="Scott G."/>
            <person name="Sodergren E."/>
            <person name="Song X.-Z."/>
            <person name="Steffen D."/>
            <person name="Wei S."/>
            <person name="Wheeler D.A."/>
            <person name="Wright M.W."/>
            <person name="Worley K.C."/>
            <person name="Yuan Y."/>
            <person name="Zhang Z."/>
            <person name="Adams C.Q."/>
            <person name="Ansari-Lari M.A."/>
            <person name="Ayele M."/>
            <person name="Brown M.J."/>
            <person name="Chen G."/>
            <person name="Chen Z."/>
            <person name="Clendenning J."/>
            <person name="Clerc-Blankenburg K.P."/>
            <person name="Chen R."/>
            <person name="Chen Z."/>
            <person name="Davis C."/>
            <person name="Delgado O."/>
            <person name="Dinh H.H."/>
            <person name="Dong W."/>
            <person name="Draper H."/>
            <person name="Ernst S."/>
            <person name="Fu G."/>
            <person name="Gonzalez-Garay M.L."/>
            <person name="Garcia D.K."/>
            <person name="Gillett W."/>
            <person name="Gu J."/>
            <person name="Hao B."/>
            <person name="Haugen E."/>
            <person name="Havlak P."/>
            <person name="He X."/>
            <person name="Hennig S."/>
            <person name="Hu S."/>
            <person name="Huang W."/>
            <person name="Jackson L.R."/>
            <person name="Jacob L.S."/>
            <person name="Kelly S.H."/>
            <person name="Kube M."/>
            <person name="Levy R."/>
            <person name="Li Z."/>
            <person name="Liu B."/>
            <person name="Liu J."/>
            <person name="Liu W."/>
            <person name="Lu J."/>
            <person name="Maheshwari M."/>
            <person name="Nguyen B.-V."/>
            <person name="Okwuonu G.O."/>
            <person name="Palmeiri A."/>
            <person name="Pasternak S."/>
            <person name="Perez L.M."/>
            <person name="Phelps K.A."/>
            <person name="Plopper F.J."/>
            <person name="Qiang B."/>
            <person name="Raymond C."/>
            <person name="Rodriguez R."/>
            <person name="Saenphimmachak C."/>
            <person name="Santibanez J."/>
            <person name="Shen H."/>
            <person name="Shen Y."/>
            <person name="Subramanian S."/>
            <person name="Tabor P.E."/>
            <person name="Verduzco D."/>
            <person name="Waldron L."/>
            <person name="Wang J."/>
            <person name="Wang J."/>
            <person name="Wang Q."/>
            <person name="Williams G.A."/>
            <person name="Wong G.K.-S."/>
            <person name="Yao Z."/>
            <person name="Zhang J."/>
            <person name="Zhang X."/>
            <person name="Zhao G."/>
            <person name="Zhou J."/>
            <person name="Zhou Y."/>
            <person name="Nelson D."/>
            <person name="Lehrach H."/>
            <person name="Reinhardt R."/>
            <person name="Naylor S.L."/>
            <person name="Yang H."/>
            <person name="Olson M."/>
            <person name="Weinstock G."/>
            <person name="Gibbs R.A."/>
        </authorList>
    </citation>
    <scope>NUCLEOTIDE SEQUENCE [LARGE SCALE GENOMIC DNA]</scope>
</reference>
<reference key="9">
    <citation type="submission" date="2005-07" db="EMBL/GenBank/DDBJ databases">
        <authorList>
            <person name="Mural R.J."/>
            <person name="Istrail S."/>
            <person name="Sutton G.G."/>
            <person name="Florea L."/>
            <person name="Halpern A.L."/>
            <person name="Mobarry C.M."/>
            <person name="Lippert R."/>
            <person name="Walenz B."/>
            <person name="Shatkay H."/>
            <person name="Dew I."/>
            <person name="Miller J.R."/>
            <person name="Flanigan M.J."/>
            <person name="Edwards N.J."/>
            <person name="Bolanos R."/>
            <person name="Fasulo D."/>
            <person name="Halldorsson B.V."/>
            <person name="Hannenhalli S."/>
            <person name="Turner R."/>
            <person name="Yooseph S."/>
            <person name="Lu F."/>
            <person name="Nusskern D.R."/>
            <person name="Shue B.C."/>
            <person name="Zheng X.H."/>
            <person name="Zhong F."/>
            <person name="Delcher A.L."/>
            <person name="Huson D.H."/>
            <person name="Kravitz S.A."/>
            <person name="Mouchard L."/>
            <person name="Reinert K."/>
            <person name="Remington K.A."/>
            <person name="Clark A.G."/>
            <person name="Waterman M.S."/>
            <person name="Eichler E.E."/>
            <person name="Adams M.D."/>
            <person name="Hunkapiller M.W."/>
            <person name="Myers E.W."/>
            <person name="Venter J.C."/>
        </authorList>
    </citation>
    <scope>NUCLEOTIDE SEQUENCE [LARGE SCALE GENOMIC DNA]</scope>
</reference>
<reference key="10">
    <citation type="journal article" date="2004" name="Genome Res.">
        <title>The status, quality, and expansion of the NIH full-length cDNA project: the Mammalian Gene Collection (MGC).</title>
        <authorList>
            <consortium name="The MGC Project Team"/>
        </authorList>
    </citation>
    <scope>NUCLEOTIDE SEQUENCE [LARGE SCALE MRNA] (ISOFORM 1)</scope>
    <source>
        <tissue>Lymph</tissue>
        <tissue>Ovary</tissue>
        <tissue>Placenta</tissue>
    </source>
</reference>
<reference key="11">
    <citation type="journal article" date="1992" name="Eur. J. Biochem.">
        <title>Demonstration that a human 26S proteolytic complex consists of a proteasome and multiple associated protein components and hydrolyzes ATP and ubiquitin-ligated proteins by closely linked mechanisms.</title>
        <authorList>
            <person name="Kanayama H.O."/>
            <person name="Tamura T."/>
            <person name="Ugai S."/>
            <person name="Kagawa S."/>
            <person name="Tanahashi N."/>
            <person name="Yoshimura T."/>
            <person name="Tanaka K."/>
            <person name="Ichihara A."/>
        </authorList>
    </citation>
    <scope>FUNCTION</scope>
</reference>
<reference key="12">
    <citation type="journal article" date="2007" name="Biochemistry">
        <title>Mass spectrometric characterization of the affinity-purified human 26S proteasome complex.</title>
        <authorList>
            <person name="Wang X."/>
            <person name="Chen C.-F."/>
            <person name="Baker P.R."/>
            <person name="Chen P.-L."/>
            <person name="Kaiser P."/>
            <person name="Huang L."/>
        </authorList>
    </citation>
    <scope>IDENTIFICATION BY MASS SPECTROMETRY [LARGE SCALE ANALYSIS]</scope>
    <source>
        <tissue>Embryonic kidney</tissue>
    </source>
</reference>
<reference key="13">
    <citation type="journal article" date="2011" name="BMC Syst. Biol.">
        <title>Initial characterization of the human central proteome.</title>
        <authorList>
            <person name="Burkard T.R."/>
            <person name="Planyavsky M."/>
            <person name="Kaupe I."/>
            <person name="Breitwieser F.P."/>
            <person name="Buerckstuemmer T."/>
            <person name="Bennett K.L."/>
            <person name="Superti-Furga G."/>
            <person name="Colinge J."/>
        </authorList>
    </citation>
    <scope>IDENTIFICATION BY MASS SPECTROMETRY [LARGE SCALE ANALYSIS]</scope>
</reference>
<reference key="14">
    <citation type="journal article" date="2012" name="Mol. Cell. Proteomics">
        <title>Comparative large-scale characterisation of plant vs. mammal proteins reveals similar and idiosyncratic N-alpha acetylation features.</title>
        <authorList>
            <person name="Bienvenut W.V."/>
            <person name="Sumpton D."/>
            <person name="Martinez A."/>
            <person name="Lilla S."/>
            <person name="Espagne C."/>
            <person name="Meinnel T."/>
            <person name="Giglione C."/>
        </authorList>
    </citation>
    <scope>CLEAVAGE OF INITIATOR METHIONINE [LARGE SCALE ANALYSIS]</scope>
    <scope>IDENTIFICATION BY MASS SPECTROMETRY [LARGE SCALE ANALYSIS]</scope>
</reference>
<reference key="15">
    <citation type="journal article" date="2012" name="Proc. Natl. Acad. Sci. U.S.A.">
        <title>N-terminal acetylome analyses and functional insights of the N-terminal acetyltransferase NatB.</title>
        <authorList>
            <person name="Van Damme P."/>
            <person name="Lasa M."/>
            <person name="Polevoda B."/>
            <person name="Gazquez C."/>
            <person name="Elosegui-Artola A."/>
            <person name="Kim D.S."/>
            <person name="De Juan-Pardo E."/>
            <person name="Demeyer K."/>
            <person name="Hole K."/>
            <person name="Larrea E."/>
            <person name="Timmerman E."/>
            <person name="Prieto J."/>
            <person name="Arnesen T."/>
            <person name="Sherman F."/>
            <person name="Gevaert K."/>
            <person name="Aldabe R."/>
        </authorList>
    </citation>
    <scope>IDENTIFICATION BY MASS SPECTROMETRY [LARGE SCALE ANALYSIS]</scope>
</reference>
<reference key="16">
    <citation type="journal article" date="2014" name="J. Proteomics">
        <title>An enzyme assisted RP-RPLC approach for in-depth analysis of human liver phosphoproteome.</title>
        <authorList>
            <person name="Bian Y."/>
            <person name="Song C."/>
            <person name="Cheng K."/>
            <person name="Dong M."/>
            <person name="Wang F."/>
            <person name="Huang J."/>
            <person name="Sun D."/>
            <person name="Wang L."/>
            <person name="Ye M."/>
            <person name="Zou H."/>
        </authorList>
    </citation>
    <scope>IDENTIFICATION BY MASS SPECTROMETRY [LARGE SCALE ANALYSIS]</scope>
    <source>
        <tissue>Liver</tissue>
    </source>
</reference>
<reference key="17">
    <citation type="journal article" date="2016" name="Nat. Struct. Mol. Biol.">
        <title>An atomic structure of the human 26S proteasome.</title>
        <authorList>
            <person name="Huang X."/>
            <person name="Luan B."/>
            <person name="Wu J."/>
            <person name="Shi Y."/>
        </authorList>
    </citation>
    <scope>STRUCTURE BY ELECTRON MICROSCOPY (3.50 ANGSTROMS) OF 1-389</scope>
    <scope>SUBUNIT</scope>
</reference>
<reference key="18">
    <citation type="journal article" date="2016" name="Proc. Natl. Acad. Sci. U.S.A.">
        <title>Structure of the human 26S proteasome at a resolution of 3.9 Aa.</title>
        <authorList>
            <person name="Schweitzer A."/>
            <person name="Aufderheide A."/>
            <person name="Rudack T."/>
            <person name="Beck F."/>
            <person name="Pfeifer G."/>
            <person name="Plitzko J.M."/>
            <person name="Sakata E."/>
            <person name="Schulten K."/>
            <person name="Foerster F."/>
            <person name="Baumeister W."/>
        </authorList>
    </citation>
    <scope>STRUCTURE BY ELECTRON MICROSCOPY (4.50 ANGSTROMS) OF 1-389</scope>
    <scope>SUBUNIT</scope>
</reference>
<sequence length="389" mass="45531">MPLENLEEEGLPKNPDLRIAQLRFLLSLPEHRGDAAVRDELMAAVRDNNMAPYYEALCKSLDWQIDVDLLNKMKKANEDELKRLDEELEDAEKNLGESEIRDAMMAKAEYLCRIGDKEGALTAFRKTYDKTVALGHRLDIVFYLLRIGLFYMDNDLITRNTEKAKSLIEEGGDWDRRNRLKVYQGLYCVAIRDFKQAAELFLDTVSTFTSYELMDYKTFVTYTVYVSMIALERPDLREKVIKGAEILEVLHSLPAVRQYLFSLYECRYSVFFQSLAVVEQEMKKDWLFAPHYRYYVREMRIHAYSQLLESYRSLTLGYMAEAFGVGVEFIDQELSRFIAAGRLHCKIDKVNEIVETNRPDSKNWQYQETIKKGDLLLNRVQKLSRVINM</sequence>
<keyword id="KW-0002">3D-structure</keyword>
<keyword id="KW-0025">Alternative splicing</keyword>
<keyword id="KW-0647">Proteasome</keyword>
<keyword id="KW-1267">Proteomics identification</keyword>
<keyword id="KW-1185">Reference proteome</keyword>
<protein>
    <recommendedName>
        <fullName>26S proteasome non-ATPase regulatory subunit 6</fullName>
    </recommendedName>
    <alternativeName>
        <fullName>26S proteasome regulatory subunit RPN7</fullName>
    </alternativeName>
    <alternativeName>
        <fullName>26S proteasome regulatory subunit S10</fullName>
    </alternativeName>
    <alternativeName>
        <fullName>Breast cancer-associated protein SGA-113M</fullName>
    </alternativeName>
    <alternativeName>
        <fullName>Phosphonoformate immuno-associated protein 4</fullName>
    </alternativeName>
    <alternativeName>
        <fullName>Proteasome regulatory particle subunit p44S10</fullName>
    </alternativeName>
    <alternativeName>
        <fullName>p42A</fullName>
    </alternativeName>
</protein>
<name>PSMD6_HUMAN</name>
<organism>
    <name type="scientific">Homo sapiens</name>
    <name type="common">Human</name>
    <dbReference type="NCBI Taxonomy" id="9606"/>
    <lineage>
        <taxon>Eukaryota</taxon>
        <taxon>Metazoa</taxon>
        <taxon>Chordata</taxon>
        <taxon>Craniata</taxon>
        <taxon>Vertebrata</taxon>
        <taxon>Euteleostomi</taxon>
        <taxon>Mammalia</taxon>
        <taxon>Eutheria</taxon>
        <taxon>Euarchontoglires</taxon>
        <taxon>Primates</taxon>
        <taxon>Haplorrhini</taxon>
        <taxon>Catarrhini</taxon>
        <taxon>Hominidae</taxon>
        <taxon>Homo</taxon>
    </lineage>
</organism>
<accession>Q15008</accession>
<accession>A8K2E0</accession>
<accession>E9PHI9</accession>
<accession>Q6UV22</accession>
<feature type="initiator methionine" description="Removed" evidence="8">
    <location>
        <position position="1"/>
    </location>
</feature>
<feature type="chain" id="PRO_0000173838" description="26S proteasome non-ATPase regulatory subunit 6">
    <location>
        <begin position="2"/>
        <end position="389"/>
    </location>
</feature>
<feature type="domain" description="PCI" evidence="1">
    <location>
        <begin position="193"/>
        <end position="361"/>
    </location>
</feature>
<feature type="splice variant" id="VSP_047711" description="In isoform 2." evidence="6">
    <original>MPLENLEEEGLPKNPDLRIAQLRFLLSLPEHRGDAAVRDELMAAVRDNN</original>
    <variation>MNESNDSTNYD</variation>
    <location>
        <begin position="1"/>
        <end position="49"/>
    </location>
</feature>
<feature type="splice variant" id="VSP_055177" description="In isoform 3." evidence="7">
    <original>GLPKNPDLRIAQLRFLLSLPEHRGDAAVRDELMAAVRDNN</original>
    <variation>D</variation>
    <location>
        <begin position="10"/>
        <end position="49"/>
    </location>
</feature>
<feature type="splice variant" id="VSP_055178" description="In isoform 4." evidence="5">
    <original>N</original>
    <variation>NFWNRIRQEQTEDCPPSSPSRGWHCQDWPSRKPPTSIRLCFAKPIIKRHRMPSY</variation>
    <location>
        <position position="49"/>
    </location>
</feature>
<feature type="helix" evidence="9">
    <location>
        <begin position="17"/>
        <end position="27"/>
    </location>
</feature>
<feature type="turn" evidence="9">
    <location>
        <begin position="29"/>
        <end position="33"/>
    </location>
</feature>
<feature type="helix" evidence="9">
    <location>
        <begin position="35"/>
        <end position="48"/>
    </location>
</feature>
<feature type="helix" evidence="9">
    <location>
        <begin position="51"/>
        <end position="61"/>
    </location>
</feature>
<feature type="helix" evidence="9">
    <location>
        <begin position="67"/>
        <end position="94"/>
    </location>
</feature>
<feature type="helix" evidence="9">
    <location>
        <begin position="97"/>
        <end position="113"/>
    </location>
</feature>
<feature type="helix" evidence="9">
    <location>
        <begin position="117"/>
        <end position="130"/>
    </location>
</feature>
<feature type="helix" evidence="9">
    <location>
        <begin position="134"/>
        <end position="151"/>
    </location>
</feature>
<feature type="helix" evidence="9">
    <location>
        <begin position="154"/>
        <end position="170"/>
    </location>
</feature>
<feature type="helix" evidence="9">
    <location>
        <begin position="174"/>
        <end position="190"/>
    </location>
</feature>
<feature type="helix" evidence="9">
    <location>
        <begin position="194"/>
        <end position="202"/>
    </location>
</feature>
<feature type="turn" evidence="9">
    <location>
        <begin position="211"/>
        <end position="213"/>
    </location>
</feature>
<feature type="helix" evidence="9">
    <location>
        <begin position="216"/>
        <end position="230"/>
    </location>
</feature>
<feature type="helix" evidence="9">
    <location>
        <begin position="233"/>
        <end position="239"/>
    </location>
</feature>
<feature type="helix" evidence="9">
    <location>
        <begin position="244"/>
        <end position="250"/>
    </location>
</feature>
<feature type="helix" evidence="9">
    <location>
        <begin position="254"/>
        <end position="265"/>
    </location>
</feature>
<feature type="helix" evidence="9">
    <location>
        <begin position="268"/>
        <end position="284"/>
    </location>
</feature>
<feature type="strand" evidence="9">
    <location>
        <begin position="285"/>
        <end position="289"/>
    </location>
</feature>
<feature type="helix" evidence="9">
    <location>
        <begin position="292"/>
        <end position="308"/>
    </location>
</feature>
<feature type="strand" evidence="9">
    <location>
        <begin position="311"/>
        <end position="315"/>
    </location>
</feature>
<feature type="helix" evidence="9">
    <location>
        <begin position="316"/>
        <end position="322"/>
    </location>
</feature>
<feature type="helix" evidence="9">
    <location>
        <begin position="327"/>
        <end position="339"/>
    </location>
</feature>
<feature type="strand" evidence="9">
    <location>
        <begin position="346"/>
        <end position="348"/>
    </location>
</feature>
<feature type="turn" evidence="9">
    <location>
        <begin position="349"/>
        <end position="352"/>
    </location>
</feature>
<feature type="strand" evidence="9">
    <location>
        <begin position="353"/>
        <end position="355"/>
    </location>
</feature>
<feature type="helix" evidence="9">
    <location>
        <begin position="361"/>
        <end position="388"/>
    </location>
</feature>